<gene>
    <name evidence="1" type="primary">kup1</name>
    <name type="ordered locus">LPC_0655</name>
</gene>
<keyword id="KW-0997">Cell inner membrane</keyword>
<keyword id="KW-1003">Cell membrane</keyword>
<keyword id="KW-0406">Ion transport</keyword>
<keyword id="KW-0472">Membrane</keyword>
<keyword id="KW-0630">Potassium</keyword>
<keyword id="KW-0633">Potassium transport</keyword>
<keyword id="KW-0769">Symport</keyword>
<keyword id="KW-0812">Transmembrane</keyword>
<keyword id="KW-1133">Transmembrane helix</keyword>
<keyword id="KW-0813">Transport</keyword>
<name>KUP1_LEGPC</name>
<proteinExistence type="inferred from homology"/>
<comment type="function">
    <text evidence="1">Transport of potassium into the cell. Likely operates as a K(+):H(+) symporter.</text>
</comment>
<comment type="catalytic activity">
    <reaction evidence="1">
        <text>K(+)(in) + H(+)(in) = K(+)(out) + H(+)(out)</text>
        <dbReference type="Rhea" id="RHEA:28490"/>
        <dbReference type="ChEBI" id="CHEBI:15378"/>
        <dbReference type="ChEBI" id="CHEBI:29103"/>
    </reaction>
    <physiologicalReaction direction="right-to-left" evidence="1">
        <dbReference type="Rhea" id="RHEA:28492"/>
    </physiologicalReaction>
</comment>
<comment type="subcellular location">
    <subcellularLocation>
        <location evidence="1">Cell inner membrane</location>
        <topology evidence="1">Multi-pass membrane protein</topology>
    </subcellularLocation>
</comment>
<comment type="similarity">
    <text evidence="1">Belongs to the HAK/KUP transporter (TC 2.A.72) family.</text>
</comment>
<dbReference type="EMBL" id="CP000675">
    <property type="protein sequence ID" value="ABQ54635.1"/>
    <property type="molecule type" value="Genomic_DNA"/>
</dbReference>
<dbReference type="KEGG" id="lpc:LPC_0655"/>
<dbReference type="HOGENOM" id="CLU_008142_4_2_6"/>
<dbReference type="GO" id="GO:0005886">
    <property type="term" value="C:plasma membrane"/>
    <property type="evidence" value="ECO:0007669"/>
    <property type="project" value="UniProtKB-SubCell"/>
</dbReference>
<dbReference type="GO" id="GO:0015079">
    <property type="term" value="F:potassium ion transmembrane transporter activity"/>
    <property type="evidence" value="ECO:0007669"/>
    <property type="project" value="UniProtKB-UniRule"/>
</dbReference>
<dbReference type="GO" id="GO:0015293">
    <property type="term" value="F:symporter activity"/>
    <property type="evidence" value="ECO:0007669"/>
    <property type="project" value="UniProtKB-UniRule"/>
</dbReference>
<dbReference type="HAMAP" id="MF_01522">
    <property type="entry name" value="Kup"/>
    <property type="match status" value="1"/>
</dbReference>
<dbReference type="InterPro" id="IPR003855">
    <property type="entry name" value="K+_transporter"/>
</dbReference>
<dbReference type="InterPro" id="IPR053952">
    <property type="entry name" value="K_trans_C"/>
</dbReference>
<dbReference type="InterPro" id="IPR053951">
    <property type="entry name" value="K_trans_N"/>
</dbReference>
<dbReference type="InterPro" id="IPR023051">
    <property type="entry name" value="Kup"/>
</dbReference>
<dbReference type="PANTHER" id="PTHR30540:SF79">
    <property type="entry name" value="LOW AFFINITY POTASSIUM TRANSPORT SYSTEM PROTEIN KUP"/>
    <property type="match status" value="1"/>
</dbReference>
<dbReference type="PANTHER" id="PTHR30540">
    <property type="entry name" value="OSMOTIC STRESS POTASSIUM TRANSPORTER"/>
    <property type="match status" value="1"/>
</dbReference>
<dbReference type="Pfam" id="PF02705">
    <property type="entry name" value="K_trans"/>
    <property type="match status" value="1"/>
</dbReference>
<dbReference type="Pfam" id="PF22776">
    <property type="entry name" value="K_trans_C"/>
    <property type="match status" value="1"/>
</dbReference>
<evidence type="ECO:0000255" key="1">
    <source>
        <dbReference type="HAMAP-Rule" id="MF_01522"/>
    </source>
</evidence>
<sequence>MRYSSYEMKKNRFTYGLALGALGVVFGDIGTSPLYALKVTLSGIPINQFNILGVLSLIFWSLIIVVSFKYLMIIFRADNDGEGGILALLALMKHKSTKYQPLFYIVAIFGAGLLLGDGMLTPAISVVSAVEGLGTLSDKLYPYVLPIASVILVLLFSLQAKGTARIGYLFGPLILIWFITIAILGILQIVEHPVVLQAINPYYAIAFLVDEGLRGYFLLGGIFLVVTGGEALFADIGHFGKNPIRFSWFFIALPCLLLNYFGQGANLIVRPEEISNPFFMIAPPWFYLPLIIIATVATVIASQAVISATFSLTKQAVLLGLCPKIPIVQTSMLHSGQIYVPQINFILFIGTMAFCLAFKTSDNLAHAYGIAVNLEMLLVDAMVAYAAVSIWRWSTFNVIFLFGLFLLIDLAFLGANTHKFITGGWVPIVLAFVIAFIMYSWRYGLEYLRDNFYMNKEDISKILKQLQYKSLNQLPGVSAIFITDVYDKSGGSFLHFLKLNRSVPENVLIVNYIVDNIPYVHYSQRYEIVCLDEKVCKLVIHYGFMETINIPRSLEKACNKNILPFKFNVDTATFMVEIPNIMASKEKRSLSFYWQEKLFAFLMRNYSANLNIEFYKLPYNRTIAIGTYCIL</sequence>
<accession>A5IB85</accession>
<reference key="1">
    <citation type="submission" date="2006-11" db="EMBL/GenBank/DDBJ databases">
        <title>Identification and characterization of a new conjugation/ type IVA secretion system (trb/tra) of L. pneumophila Corby localized on a mobile genomic island.</title>
        <authorList>
            <person name="Gloeckner G."/>
            <person name="Albert-Weissenberger C."/>
            <person name="Weinmann E."/>
            <person name="Jacobi S."/>
            <person name="Schunder E."/>
            <person name="Steinert M."/>
            <person name="Buchrieser C."/>
            <person name="Hacker J."/>
            <person name="Heuner K."/>
        </authorList>
    </citation>
    <scope>NUCLEOTIDE SEQUENCE [LARGE SCALE GENOMIC DNA]</scope>
    <source>
        <strain>Corby</strain>
    </source>
</reference>
<organism>
    <name type="scientific">Legionella pneumophila (strain Corby)</name>
    <dbReference type="NCBI Taxonomy" id="400673"/>
    <lineage>
        <taxon>Bacteria</taxon>
        <taxon>Pseudomonadati</taxon>
        <taxon>Pseudomonadota</taxon>
        <taxon>Gammaproteobacteria</taxon>
        <taxon>Legionellales</taxon>
        <taxon>Legionellaceae</taxon>
        <taxon>Legionella</taxon>
    </lineage>
</organism>
<feature type="chain" id="PRO_0000315985" description="Probable potassium transport system protein Kup 1">
    <location>
        <begin position="1"/>
        <end position="631"/>
    </location>
</feature>
<feature type="transmembrane region" description="Helical" evidence="1">
    <location>
        <begin position="17"/>
        <end position="37"/>
    </location>
</feature>
<feature type="transmembrane region" description="Helical" evidence="1">
    <location>
        <begin position="55"/>
        <end position="75"/>
    </location>
</feature>
<feature type="transmembrane region" description="Helical" evidence="1">
    <location>
        <begin position="101"/>
        <end position="121"/>
    </location>
</feature>
<feature type="transmembrane region" description="Helical" evidence="1">
    <location>
        <begin position="140"/>
        <end position="160"/>
    </location>
</feature>
<feature type="transmembrane region" description="Helical" evidence="1">
    <location>
        <begin position="166"/>
        <end position="186"/>
    </location>
</feature>
<feature type="transmembrane region" description="Helical" evidence="1">
    <location>
        <begin position="217"/>
        <end position="237"/>
    </location>
</feature>
<feature type="transmembrane region" description="Helical" evidence="1">
    <location>
        <begin position="249"/>
        <end position="269"/>
    </location>
</feature>
<feature type="transmembrane region" description="Helical" evidence="1">
    <location>
        <begin position="277"/>
        <end position="297"/>
    </location>
</feature>
<feature type="transmembrane region" description="Helical" evidence="1">
    <location>
        <begin position="338"/>
        <end position="358"/>
    </location>
</feature>
<feature type="transmembrane region" description="Helical" evidence="1">
    <location>
        <begin position="370"/>
        <end position="390"/>
    </location>
</feature>
<feature type="transmembrane region" description="Helical" evidence="1">
    <location>
        <begin position="395"/>
        <end position="415"/>
    </location>
</feature>
<feature type="transmembrane region" description="Helical" evidence="1">
    <location>
        <begin position="420"/>
        <end position="440"/>
    </location>
</feature>
<protein>
    <recommendedName>
        <fullName evidence="1">Probable potassium transport system protein Kup 1</fullName>
    </recommendedName>
</protein>